<comment type="function">
    <text evidence="2">With S4 and S5 plays an important role in translational accuracy.</text>
</comment>
<comment type="function">
    <text evidence="2">Interacts with and stabilizes bases of the 16S rRNA that are involved in tRNA selection in the A site and with the mRNA backbone. Located at the interface of the 30S and 50S subunits, it traverses the body of the 30S subunit contacting proteins on the other side and probably holding the rRNA structure together. The combined cluster of proteins S8, S12 and S17 appears to hold together the shoulder and platform of the 30S subunit.</text>
</comment>
<comment type="subunit">
    <text evidence="2">Part of the 30S ribosomal subunit. Contacts proteins S8 and S17. May interact with IF1 in the 30S initiation complex.</text>
</comment>
<comment type="similarity">
    <text evidence="2">Belongs to the universal ribosomal protein uS12 family.</text>
</comment>
<reference key="1">
    <citation type="journal article" date="2001" name="Microb. Drug Resist.">
        <title>Annotated draft genomic sequence from a Streptococcus pneumoniae type 19F clinical isolate.</title>
        <authorList>
            <person name="Dopazo J."/>
            <person name="Mendoza A."/>
            <person name="Herrero J."/>
            <person name="Caldara F."/>
            <person name="Humbert Y."/>
            <person name="Friedli L."/>
            <person name="Guerrier M."/>
            <person name="Grand-Schenk E."/>
            <person name="Gandin C."/>
            <person name="de Francesco M."/>
            <person name="Polissi A."/>
            <person name="Buell G."/>
            <person name="Feger G."/>
            <person name="Garcia E."/>
            <person name="Peitsch M."/>
            <person name="Garcia-Bustos J.F."/>
        </authorList>
    </citation>
    <scope>NUCLEOTIDE SEQUENCE [LARGE SCALE GENOMIC DNA]</scope>
    <source>
        <strain>G54</strain>
    </source>
</reference>
<reference key="2">
    <citation type="submission" date="2008-03" db="EMBL/GenBank/DDBJ databases">
        <title>Pneumococcal beta glucoside metabolism investigated by whole genome comparison.</title>
        <authorList>
            <person name="Mulas L."/>
            <person name="Trappetti C."/>
            <person name="Hakenbeck R."/>
            <person name="Iannelli F."/>
            <person name="Pozzi G."/>
            <person name="Davidsen T.M."/>
            <person name="Tettelin H."/>
            <person name="Oggioni M."/>
        </authorList>
    </citation>
    <scope>NUCLEOTIDE SEQUENCE [LARGE SCALE GENOMIC DNA]</scope>
    <source>
        <strain>G54</strain>
    </source>
</reference>
<organism>
    <name type="scientific">Streptococcus pneumoniae serotype 19F (strain G54)</name>
    <dbReference type="NCBI Taxonomy" id="512566"/>
    <lineage>
        <taxon>Bacteria</taxon>
        <taxon>Bacillati</taxon>
        <taxon>Bacillota</taxon>
        <taxon>Bacilli</taxon>
        <taxon>Lactobacillales</taxon>
        <taxon>Streptococcaceae</taxon>
        <taxon>Streptococcus</taxon>
    </lineage>
</organism>
<sequence>MPTINQLVRKPRKSKVEKSKSPALNVGYNSHKKVQTNVSSPQKRGVATRVGTMTPKKPNSALRKFARVRLSNLIEVTAYIPGIGHNLQEHSVVLLRGGRVKDLPGVRYHIVRGALDTAGVNDRKQGRSKYGTKRPKA</sequence>
<name>RS12_STRP4</name>
<keyword id="KW-0488">Methylation</keyword>
<keyword id="KW-0687">Ribonucleoprotein</keyword>
<keyword id="KW-0689">Ribosomal protein</keyword>
<keyword id="KW-0694">RNA-binding</keyword>
<keyword id="KW-0699">rRNA-binding</keyword>
<keyword id="KW-0820">tRNA-binding</keyword>
<protein>
    <recommendedName>
        <fullName evidence="2">Small ribosomal subunit protein uS12</fullName>
    </recommendedName>
    <alternativeName>
        <fullName evidence="4">30S ribosomal protein S12</fullName>
    </alternativeName>
</protein>
<feature type="chain" id="PRO_1000123524" description="Small ribosomal subunit protein uS12">
    <location>
        <begin position="1"/>
        <end position="137"/>
    </location>
</feature>
<feature type="region of interest" description="Disordered" evidence="3">
    <location>
        <begin position="1"/>
        <end position="57"/>
    </location>
</feature>
<feature type="modified residue" description="3-methylthioaspartic acid" evidence="1">
    <location>
        <position position="102"/>
    </location>
</feature>
<dbReference type="EMBL" id="CP001015">
    <property type="protein sequence ID" value="ACF55881.1"/>
    <property type="molecule type" value="Genomic_DNA"/>
</dbReference>
<dbReference type="SMR" id="B5E6U3"/>
<dbReference type="KEGG" id="spx:SPG_0254"/>
<dbReference type="HOGENOM" id="CLU_104295_1_2_9"/>
<dbReference type="GO" id="GO:0015935">
    <property type="term" value="C:small ribosomal subunit"/>
    <property type="evidence" value="ECO:0007669"/>
    <property type="project" value="InterPro"/>
</dbReference>
<dbReference type="GO" id="GO:0019843">
    <property type="term" value="F:rRNA binding"/>
    <property type="evidence" value="ECO:0007669"/>
    <property type="project" value="UniProtKB-UniRule"/>
</dbReference>
<dbReference type="GO" id="GO:0003735">
    <property type="term" value="F:structural constituent of ribosome"/>
    <property type="evidence" value="ECO:0007669"/>
    <property type="project" value="InterPro"/>
</dbReference>
<dbReference type="GO" id="GO:0000049">
    <property type="term" value="F:tRNA binding"/>
    <property type="evidence" value="ECO:0007669"/>
    <property type="project" value="UniProtKB-UniRule"/>
</dbReference>
<dbReference type="GO" id="GO:0006412">
    <property type="term" value="P:translation"/>
    <property type="evidence" value="ECO:0007669"/>
    <property type="project" value="UniProtKB-UniRule"/>
</dbReference>
<dbReference type="CDD" id="cd03368">
    <property type="entry name" value="Ribosomal_S12"/>
    <property type="match status" value="1"/>
</dbReference>
<dbReference type="FunFam" id="2.40.50.140:FF:000001">
    <property type="entry name" value="30S ribosomal protein S12"/>
    <property type="match status" value="1"/>
</dbReference>
<dbReference type="Gene3D" id="2.40.50.140">
    <property type="entry name" value="Nucleic acid-binding proteins"/>
    <property type="match status" value="1"/>
</dbReference>
<dbReference type="HAMAP" id="MF_00403_B">
    <property type="entry name" value="Ribosomal_uS12_B"/>
    <property type="match status" value="1"/>
</dbReference>
<dbReference type="InterPro" id="IPR012340">
    <property type="entry name" value="NA-bd_OB-fold"/>
</dbReference>
<dbReference type="InterPro" id="IPR006032">
    <property type="entry name" value="Ribosomal_uS12"/>
</dbReference>
<dbReference type="InterPro" id="IPR005679">
    <property type="entry name" value="Ribosomal_uS12_bac"/>
</dbReference>
<dbReference type="NCBIfam" id="TIGR00981">
    <property type="entry name" value="rpsL_bact"/>
    <property type="match status" value="1"/>
</dbReference>
<dbReference type="PANTHER" id="PTHR11652">
    <property type="entry name" value="30S RIBOSOMAL PROTEIN S12 FAMILY MEMBER"/>
    <property type="match status" value="1"/>
</dbReference>
<dbReference type="Pfam" id="PF00164">
    <property type="entry name" value="Ribosom_S12_S23"/>
    <property type="match status" value="1"/>
</dbReference>
<dbReference type="PIRSF" id="PIRSF002133">
    <property type="entry name" value="Ribosomal_S12/S23"/>
    <property type="match status" value="1"/>
</dbReference>
<dbReference type="PRINTS" id="PR01034">
    <property type="entry name" value="RIBOSOMALS12"/>
</dbReference>
<dbReference type="SUPFAM" id="SSF50249">
    <property type="entry name" value="Nucleic acid-binding proteins"/>
    <property type="match status" value="1"/>
</dbReference>
<dbReference type="PROSITE" id="PS00055">
    <property type="entry name" value="RIBOSOMAL_S12"/>
    <property type="match status" value="1"/>
</dbReference>
<gene>
    <name evidence="2" type="primary">rpsL</name>
    <name type="ordered locus">SPG_0254</name>
</gene>
<evidence type="ECO:0000250" key="1"/>
<evidence type="ECO:0000255" key="2">
    <source>
        <dbReference type="HAMAP-Rule" id="MF_00403"/>
    </source>
</evidence>
<evidence type="ECO:0000256" key="3">
    <source>
        <dbReference type="SAM" id="MobiDB-lite"/>
    </source>
</evidence>
<evidence type="ECO:0000305" key="4"/>
<proteinExistence type="inferred from homology"/>
<accession>B5E6U3</accession>